<accession>Q82RR7</accession>
<reference key="1">
    <citation type="journal article" date="2001" name="Proc. Natl. Acad. Sci. U.S.A.">
        <title>Genome sequence of an industrial microorganism Streptomyces avermitilis: deducing the ability of producing secondary metabolites.</title>
        <authorList>
            <person name="Omura S."/>
            <person name="Ikeda H."/>
            <person name="Ishikawa J."/>
            <person name="Hanamoto A."/>
            <person name="Takahashi C."/>
            <person name="Shinose M."/>
            <person name="Takahashi Y."/>
            <person name="Horikawa H."/>
            <person name="Nakazawa H."/>
            <person name="Osonoe T."/>
            <person name="Kikuchi H."/>
            <person name="Shiba T."/>
            <person name="Sakaki Y."/>
            <person name="Hattori M."/>
        </authorList>
    </citation>
    <scope>NUCLEOTIDE SEQUENCE [LARGE SCALE GENOMIC DNA]</scope>
    <source>
        <strain>ATCC 31267 / DSM 46492 / JCM 5070 / NBRC 14893 / NCIMB 12804 / NRRL 8165 / MA-4680</strain>
    </source>
</reference>
<reference key="2">
    <citation type="journal article" date="2003" name="Nat. Biotechnol.">
        <title>Complete genome sequence and comparative analysis of the industrial microorganism Streptomyces avermitilis.</title>
        <authorList>
            <person name="Ikeda H."/>
            <person name="Ishikawa J."/>
            <person name="Hanamoto A."/>
            <person name="Shinose M."/>
            <person name="Kikuchi H."/>
            <person name="Shiba T."/>
            <person name="Sakaki Y."/>
            <person name="Hattori M."/>
            <person name="Omura S."/>
        </authorList>
    </citation>
    <scope>NUCLEOTIDE SEQUENCE [LARGE SCALE GENOMIC DNA]</scope>
    <source>
        <strain>ATCC 31267 / DSM 46492 / JCM 5070 / NBRC 14893 / NCIMB 12804 / NRRL 8165 / MA-4680</strain>
    </source>
</reference>
<reference key="3">
    <citation type="journal article" date="2010" name="J. Am. Chem. Soc.">
        <title>Genome mining in Streptomyces avermitilis: cloning and characterization of SAV_76, the synthase for a new sesquiterpene, avermitilol.</title>
        <authorList>
            <person name="Chou W.K."/>
            <person name="Fanizza I."/>
            <person name="Uchiyama T."/>
            <person name="Komatsu M."/>
            <person name="Ikeda H."/>
            <person name="Cane D.E."/>
        </authorList>
    </citation>
    <scope>FUNCTION</scope>
    <scope>CATALYTIC ACTIVITY</scope>
    <scope>BIOPHYSICOCHEMICAL PROPERTIES</scope>
</reference>
<name>TPC1_STRAW</name>
<comment type="function">
    <text evidence="2">Catalyzes the cyclization of farnesyl diphosphate to avermitilol.</text>
</comment>
<comment type="catalytic activity">
    <reaction evidence="2">
        <text>(2E,6E)-farnesyl diphosphate + H2O = avermitilol + diphosphate</text>
        <dbReference type="Rhea" id="RHEA:32023"/>
        <dbReference type="ChEBI" id="CHEBI:15377"/>
        <dbReference type="ChEBI" id="CHEBI:33019"/>
        <dbReference type="ChEBI" id="CHEBI:63702"/>
        <dbReference type="ChEBI" id="CHEBI:175763"/>
        <dbReference type="EC" id="4.2.3.96"/>
    </reaction>
</comment>
<comment type="cofactor">
    <cofactor evidence="1">
        <name>Mg(2+)</name>
        <dbReference type="ChEBI" id="CHEBI:18420"/>
    </cofactor>
    <text evidence="1">Binds 3 Mg(2+) ions per subunit.</text>
</comment>
<comment type="biophysicochemical properties">
    <kinetics>
        <KM evidence="2">1.06 uM for farnesyl diphosphate</KM>
        <text>kcat is 0.04 sec(-1).</text>
    </kinetics>
</comment>
<comment type="miscellaneous">
    <text evidence="4">The recombinent enzyme produces avermitilol (85%), accompanied by small quantities of germacrene A, germacrene B and viridiflorol.</text>
</comment>
<comment type="similarity">
    <text evidence="3">Belongs to the terpene synthase family.</text>
</comment>
<protein>
    <recommendedName>
        <fullName>Avermitilol synthase</fullName>
        <ecNumber>4.2.3.96</ecNumber>
    </recommendedName>
</protein>
<feature type="chain" id="PRO_0000418451" description="Avermitilol synthase">
    <location>
        <begin position="1"/>
        <end position="335"/>
    </location>
</feature>
<feature type="short sequence motif" description="DDXXD motif">
    <location>
        <begin position="80"/>
        <end position="84"/>
    </location>
</feature>
<feature type="binding site" evidence="1">
    <location>
        <position position="80"/>
    </location>
    <ligand>
        <name>Mg(2+)</name>
        <dbReference type="ChEBI" id="CHEBI:18420"/>
        <label>1</label>
    </ligand>
</feature>
<feature type="binding site" evidence="1">
    <location>
        <position position="80"/>
    </location>
    <ligand>
        <name>Mg(2+)</name>
        <dbReference type="ChEBI" id="CHEBI:18420"/>
        <label>2</label>
    </ligand>
</feature>
<feature type="binding site" evidence="1">
    <location>
        <position position="84"/>
    </location>
    <ligand>
        <name>Mg(2+)</name>
        <dbReference type="ChEBI" id="CHEBI:18420"/>
        <label>1</label>
    </ligand>
</feature>
<feature type="binding site" evidence="1">
    <location>
        <position position="84"/>
    </location>
    <ligand>
        <name>Mg(2+)</name>
        <dbReference type="ChEBI" id="CHEBI:18420"/>
        <label>2</label>
    </ligand>
</feature>
<feature type="binding site" evidence="1">
    <location>
        <position position="219"/>
    </location>
    <ligand>
        <name>Mg(2+)</name>
        <dbReference type="ChEBI" id="CHEBI:18420"/>
        <label>3</label>
    </ligand>
</feature>
<feature type="binding site" evidence="1">
    <location>
        <position position="223"/>
    </location>
    <ligand>
        <name>Mg(2+)</name>
        <dbReference type="ChEBI" id="CHEBI:18420"/>
        <label>3</label>
    </ligand>
</feature>
<feature type="binding site" evidence="1">
    <location>
        <position position="227"/>
    </location>
    <ligand>
        <name>Mg(2+)</name>
        <dbReference type="ChEBI" id="CHEBI:18420"/>
        <label>3</label>
    </ligand>
</feature>
<organism>
    <name type="scientific">Streptomyces avermitilis (strain ATCC 31267 / DSM 46492 / JCM 5070 / NBRC 14893 / NCIMB 12804 / NRRL 8165 / MA-4680)</name>
    <dbReference type="NCBI Taxonomy" id="227882"/>
    <lineage>
        <taxon>Bacteria</taxon>
        <taxon>Bacillati</taxon>
        <taxon>Actinomycetota</taxon>
        <taxon>Actinomycetes</taxon>
        <taxon>Kitasatosporales</taxon>
        <taxon>Streptomycetaceae</taxon>
        <taxon>Streptomyces</taxon>
    </lineage>
</organism>
<gene>
    <name type="primary">tpc1</name>
    <name type="ordered locus">SAV_76</name>
</gene>
<keyword id="KW-0456">Lyase</keyword>
<keyword id="KW-0460">Magnesium</keyword>
<keyword id="KW-0479">Metal-binding</keyword>
<keyword id="KW-1185">Reference proteome</keyword>
<proteinExistence type="evidence at protein level"/>
<sequence length="335" mass="36480">MPQDIDFGLPAPAGISPGLEATRRHNLGWVRRLGLVGDGPSLAWYTSWDMPRLAACGFPHARGAALDLCADAMAFFFVFDDQFDGPLGRDPARAARVCRRLTGIVHGAGPGPGADACSAAFADVWARSTDGAHPGWVARTAHEWEYYFAAQAHEAINRLRGTPGDMESYLQVRRGIAGTDLPLSLGERAAGITVPAAAFHSPQLRIMREAAIDVTLMCNDVYSLEKEEARGDMDNLVLVIEHARRCTRDEAVTAARGEVARRVIRFEQLAREVPALCAQLGLSAVERAHVDTYLGVMEAWMSGYHAWQTQTRRYTGAPHVLPSTGPGYFDEVLPT</sequence>
<evidence type="ECO:0000250" key="1"/>
<evidence type="ECO:0000269" key="2">
    <source>
    </source>
</evidence>
<evidence type="ECO:0000305" key="3"/>
<evidence type="ECO:0000305" key="4">
    <source>
    </source>
</evidence>
<dbReference type="EC" id="4.2.3.96"/>
<dbReference type="EMBL" id="BA000030">
    <property type="protein sequence ID" value="BAC67785.1"/>
    <property type="molecule type" value="Genomic_DNA"/>
</dbReference>
<dbReference type="RefSeq" id="WP_010981512.1">
    <property type="nucleotide sequence ID" value="NZ_JZJK01000037.1"/>
</dbReference>
<dbReference type="SMR" id="Q82RR7"/>
<dbReference type="GeneID" id="41537273"/>
<dbReference type="KEGG" id="sma:SAVERM_76"/>
<dbReference type="eggNOG" id="COG2124">
    <property type="taxonomic scope" value="Bacteria"/>
</dbReference>
<dbReference type="HOGENOM" id="CLU_042538_4_0_11"/>
<dbReference type="OrthoDB" id="3676909at2"/>
<dbReference type="Proteomes" id="UP000000428">
    <property type="component" value="Chromosome"/>
</dbReference>
<dbReference type="GO" id="GO:0046872">
    <property type="term" value="F:metal ion binding"/>
    <property type="evidence" value="ECO:0007669"/>
    <property type="project" value="UniProtKB-KW"/>
</dbReference>
<dbReference type="GO" id="GO:0010333">
    <property type="term" value="F:terpene synthase activity"/>
    <property type="evidence" value="ECO:0007669"/>
    <property type="project" value="InterPro"/>
</dbReference>
<dbReference type="Gene3D" id="1.10.600.10">
    <property type="entry name" value="Farnesyl Diphosphate Synthase"/>
    <property type="match status" value="1"/>
</dbReference>
<dbReference type="InterPro" id="IPR008949">
    <property type="entry name" value="Isoprenoid_synthase_dom_sf"/>
</dbReference>
<dbReference type="InterPro" id="IPR034686">
    <property type="entry name" value="Terpene_cyclase-like_2"/>
</dbReference>
<dbReference type="PANTHER" id="PTHR35201:SF4">
    <property type="entry name" value="BETA-PINACENE SYNTHASE-RELATED"/>
    <property type="match status" value="1"/>
</dbReference>
<dbReference type="PANTHER" id="PTHR35201">
    <property type="entry name" value="TERPENE SYNTHASE"/>
    <property type="match status" value="1"/>
</dbReference>
<dbReference type="Pfam" id="PF19086">
    <property type="entry name" value="Terpene_syn_C_2"/>
    <property type="match status" value="1"/>
</dbReference>
<dbReference type="SFLD" id="SFLDS00005">
    <property type="entry name" value="Isoprenoid_Synthase_Type_I"/>
    <property type="match status" value="1"/>
</dbReference>
<dbReference type="SFLD" id="SFLDG01020">
    <property type="entry name" value="Terpene_Cyclase_Like_2"/>
    <property type="match status" value="1"/>
</dbReference>
<dbReference type="SUPFAM" id="SSF48576">
    <property type="entry name" value="Terpenoid synthases"/>
    <property type="match status" value="1"/>
</dbReference>